<feature type="chain" id="PRO_0000419310" description="Growth-regulating factor 9">
    <location>
        <begin position="1"/>
        <end position="426"/>
    </location>
</feature>
<feature type="domain" description="QLQ" evidence="2">
    <location>
        <begin position="92"/>
        <end position="127"/>
    </location>
</feature>
<feature type="domain" description="WRC" evidence="3">
    <location>
        <begin position="151"/>
        <end position="195"/>
    </location>
</feature>
<feature type="region of interest" description="Disordered" evidence="4">
    <location>
        <begin position="184"/>
        <end position="222"/>
    </location>
</feature>
<feature type="short sequence motif" description="Bipartite nuclear localization signal" evidence="3">
    <location>
        <begin position="156"/>
        <end position="166"/>
    </location>
</feature>
<feature type="short sequence motif" description="Bipartite nuclear localization signal" evidence="3">
    <location>
        <begin position="184"/>
        <end position="191"/>
    </location>
</feature>
<feature type="compositionally biased region" description="Basic and acidic residues" evidence="4">
    <location>
        <begin position="191"/>
        <end position="202"/>
    </location>
</feature>
<comment type="function">
    <text evidence="1">Transcription activator that plays a regulatory role in gibberellin-induced stem elongation.</text>
</comment>
<comment type="subcellular location">
    <subcellularLocation>
        <location evidence="3">Nucleus</location>
    </subcellularLocation>
</comment>
<comment type="domain">
    <text>The QLQ domain and WRC domain may be involved in protein-protein interaction and DNA-binding, respectively.</text>
</comment>
<comment type="similarity">
    <text evidence="5">Belongs to the GRF family.</text>
</comment>
<comment type="sequence caution" evidence="5">
    <conflict type="erroneous initiation">
        <sequence resource="EMBL-CDS" id="EAZ28107"/>
    </conflict>
    <text>Truncated N-terminus.</text>
</comment>
<accession>Q9FRG8</accession>
<accession>A0A0P0W1C0</accession>
<accession>A3ALB8</accession>
<evidence type="ECO:0000250" key="1"/>
<evidence type="ECO:0000255" key="2">
    <source>
        <dbReference type="PROSITE-ProRule" id="PRU01001"/>
    </source>
</evidence>
<evidence type="ECO:0000255" key="3">
    <source>
        <dbReference type="PROSITE-ProRule" id="PRU01002"/>
    </source>
</evidence>
<evidence type="ECO:0000256" key="4">
    <source>
        <dbReference type="SAM" id="MobiDB-lite"/>
    </source>
</evidence>
<evidence type="ECO:0000305" key="5"/>
<organism>
    <name type="scientific">Oryza sativa subsp. japonica</name>
    <name type="common">Rice</name>
    <dbReference type="NCBI Taxonomy" id="39947"/>
    <lineage>
        <taxon>Eukaryota</taxon>
        <taxon>Viridiplantae</taxon>
        <taxon>Streptophyta</taxon>
        <taxon>Embryophyta</taxon>
        <taxon>Tracheophyta</taxon>
        <taxon>Spermatophyta</taxon>
        <taxon>Magnoliopsida</taxon>
        <taxon>Liliopsida</taxon>
        <taxon>Poales</taxon>
        <taxon>Poaceae</taxon>
        <taxon>BOP clade</taxon>
        <taxon>Oryzoideae</taxon>
        <taxon>Oryzeae</taxon>
        <taxon>Oryzinae</taxon>
        <taxon>Oryza</taxon>
        <taxon>Oryza sativa</taxon>
    </lineage>
</organism>
<keyword id="KW-0010">Activator</keyword>
<keyword id="KW-0539">Nucleus</keyword>
<keyword id="KW-1185">Reference proteome</keyword>
<keyword id="KW-0804">Transcription</keyword>
<keyword id="KW-0805">Transcription regulation</keyword>
<sequence>MFADFSAAAMELGEVLGLQGLTVPSTKEGDLSLIKRAAAGSFTQAAAASYPSPFLDEQKMLRFAKAAHTLPSGLDFGRENEQRFLLSRTKRPFTPSQWMELEHQALIYKYLNAKAPIPSSLLISISKSFRSSANRMSWRPLYQGFPNADSDPEPGRCRRTDGKKWRCSKEAMADHKYCERHINRNRHRSRKPVENQSRKTVKETPCAGSLPSSVGQGSFKKAKVNEMKPRSISYWTDSLNRTMANKEKGNKAAEENNGPLLNLTNQQPTLSLFSQLKQQNKPEKFNTAGDSESISSNTMLKPWESSNQQNNKSIPFTKMHDRGCLQSVLQNFSLPKDEKMEFQKSKDSNVMTVPSTFYSSPEDPRVSCHAPNMAQMQEDSISSSWEMPQGGPLGEILTNSKNPDDSIMKPEARPYGWLLNLEDHAM</sequence>
<proteinExistence type="evidence at transcript level"/>
<dbReference type="EMBL" id="AC079830">
    <property type="protein sequence ID" value="AAG46075.1"/>
    <property type="molecule type" value="Genomic_DNA"/>
</dbReference>
<dbReference type="EMBL" id="AC090683">
    <property type="protein sequence ID" value="AAR87187.1"/>
    <property type="molecule type" value="Genomic_DNA"/>
</dbReference>
<dbReference type="EMBL" id="DP000009">
    <property type="protein sequence ID" value="ABF98153.1"/>
    <property type="molecule type" value="Genomic_DNA"/>
</dbReference>
<dbReference type="EMBL" id="AP008209">
    <property type="protein sequence ID" value="BAF12796.1"/>
    <property type="molecule type" value="Genomic_DNA"/>
</dbReference>
<dbReference type="EMBL" id="AP014959">
    <property type="protein sequence ID" value="BAS85710.1"/>
    <property type="molecule type" value="Genomic_DNA"/>
</dbReference>
<dbReference type="EMBL" id="CM000140">
    <property type="protein sequence ID" value="EAZ28107.1"/>
    <property type="status" value="ALT_INIT"/>
    <property type="molecule type" value="Genomic_DNA"/>
</dbReference>
<dbReference type="EMBL" id="AK058659">
    <property type="protein sequence ID" value="BAG86767.1"/>
    <property type="molecule type" value="mRNA"/>
</dbReference>
<dbReference type="EMBL" id="BK004878">
    <property type="protein sequence ID" value="DAA04953.1"/>
    <property type="molecule type" value="Genomic_DNA"/>
</dbReference>
<dbReference type="RefSeq" id="XP_015627920.1">
    <property type="nucleotide sequence ID" value="XM_015772434.1"/>
</dbReference>
<dbReference type="FunCoup" id="Q9FRG8">
    <property type="interactions" value="764"/>
</dbReference>
<dbReference type="PaxDb" id="39947-Q9FRG8"/>
<dbReference type="EnsemblPlants" id="Os03t0674700-01">
    <property type="protein sequence ID" value="Os03t0674700-01"/>
    <property type="gene ID" value="Os03g0674700"/>
</dbReference>
<dbReference type="Gramene" id="Os03t0674700-01">
    <property type="protein sequence ID" value="Os03t0674700-01"/>
    <property type="gene ID" value="Os03g0674700"/>
</dbReference>
<dbReference type="KEGG" id="dosa:Os03g0674700"/>
<dbReference type="eggNOG" id="ENOG502QRK7">
    <property type="taxonomic scope" value="Eukaryota"/>
</dbReference>
<dbReference type="HOGENOM" id="CLU_054662_0_0_1"/>
<dbReference type="InParanoid" id="Q9FRG8"/>
<dbReference type="OMA" id="KDISCTQ"/>
<dbReference type="Proteomes" id="UP000000763">
    <property type="component" value="Chromosome 3"/>
</dbReference>
<dbReference type="Proteomes" id="UP000007752">
    <property type="component" value="Chromosome 3"/>
</dbReference>
<dbReference type="Proteomes" id="UP000059680">
    <property type="component" value="Chromosome 3"/>
</dbReference>
<dbReference type="GO" id="GO:0005634">
    <property type="term" value="C:nucleus"/>
    <property type="evidence" value="ECO:0007669"/>
    <property type="project" value="UniProtKB-SubCell"/>
</dbReference>
<dbReference type="GO" id="GO:0005524">
    <property type="term" value="F:ATP binding"/>
    <property type="evidence" value="ECO:0007669"/>
    <property type="project" value="InterPro"/>
</dbReference>
<dbReference type="GO" id="GO:0032502">
    <property type="term" value="P:developmental process"/>
    <property type="evidence" value="ECO:0007669"/>
    <property type="project" value="InterPro"/>
</dbReference>
<dbReference type="GO" id="GO:0006351">
    <property type="term" value="P:DNA-templated transcription"/>
    <property type="evidence" value="ECO:0007669"/>
    <property type="project" value="InterPro"/>
</dbReference>
<dbReference type="GO" id="GO:0006355">
    <property type="term" value="P:regulation of DNA-templated transcription"/>
    <property type="evidence" value="ECO:0007669"/>
    <property type="project" value="InterPro"/>
</dbReference>
<dbReference type="InterPro" id="IPR014978">
    <property type="entry name" value="Gln-Leu-Gln_QLQ"/>
</dbReference>
<dbReference type="InterPro" id="IPR031137">
    <property type="entry name" value="GRF"/>
</dbReference>
<dbReference type="InterPro" id="IPR014977">
    <property type="entry name" value="WRC_dom"/>
</dbReference>
<dbReference type="PANTHER" id="PTHR31602">
    <property type="entry name" value="GROWTH-REGULATING FACTOR 5"/>
    <property type="match status" value="1"/>
</dbReference>
<dbReference type="PANTHER" id="PTHR31602:SF92">
    <property type="entry name" value="GROWTH-REGULATING FACTOR 9"/>
    <property type="match status" value="1"/>
</dbReference>
<dbReference type="Pfam" id="PF08880">
    <property type="entry name" value="QLQ"/>
    <property type="match status" value="1"/>
</dbReference>
<dbReference type="Pfam" id="PF08879">
    <property type="entry name" value="WRC"/>
    <property type="match status" value="1"/>
</dbReference>
<dbReference type="SMART" id="SM00951">
    <property type="entry name" value="QLQ"/>
    <property type="match status" value="1"/>
</dbReference>
<dbReference type="PROSITE" id="PS51666">
    <property type="entry name" value="QLQ"/>
    <property type="match status" value="1"/>
</dbReference>
<dbReference type="PROSITE" id="PS51667">
    <property type="entry name" value="WRC"/>
    <property type="match status" value="1"/>
</dbReference>
<gene>
    <name type="primary">GRF9</name>
    <name type="ordered locus">Os03g0674700</name>
    <name type="ordered locus">LOC_Os03g47140</name>
    <name type="ORF">OsJ_12074</name>
    <name type="ORF">OSJNBa0035I24.1</name>
    <name type="ORF">OSJNBb0009F04</name>
</gene>
<name>GRF9_ORYSJ</name>
<protein>
    <recommendedName>
        <fullName>Growth-regulating factor 9</fullName>
        <shortName>OsGRF9</shortName>
    </recommendedName>
    <alternativeName>
        <fullName>Transcription activator GRF9</fullName>
    </alternativeName>
</protein>
<reference key="1">
    <citation type="journal article" date="2005" name="Genome Res.">
        <title>Sequence, annotation, and analysis of synteny between rice chromosome 3 and diverged grass species.</title>
        <authorList>
            <consortium name="The rice chromosome 3 sequencing consortium"/>
            <person name="Buell C.R."/>
            <person name="Yuan Q."/>
            <person name="Ouyang S."/>
            <person name="Liu J."/>
            <person name="Zhu W."/>
            <person name="Wang A."/>
            <person name="Maiti R."/>
            <person name="Haas B."/>
            <person name="Wortman J."/>
            <person name="Pertea M."/>
            <person name="Jones K.M."/>
            <person name="Kim M."/>
            <person name="Overton L."/>
            <person name="Tsitrin T."/>
            <person name="Fadrosh D."/>
            <person name="Bera J."/>
            <person name="Weaver B."/>
            <person name="Jin S."/>
            <person name="Johri S."/>
            <person name="Reardon M."/>
            <person name="Webb K."/>
            <person name="Hill J."/>
            <person name="Moffat K."/>
            <person name="Tallon L."/>
            <person name="Van Aken S."/>
            <person name="Lewis M."/>
            <person name="Utterback T."/>
            <person name="Feldblyum T."/>
            <person name="Zismann V."/>
            <person name="Iobst S."/>
            <person name="Hsiao J."/>
            <person name="de Vazeille A.R."/>
            <person name="Salzberg S.L."/>
            <person name="White O."/>
            <person name="Fraser C.M."/>
            <person name="Yu Y."/>
            <person name="Kim H."/>
            <person name="Rambo T."/>
            <person name="Currie J."/>
            <person name="Collura K."/>
            <person name="Kernodle-Thompson S."/>
            <person name="Wei F."/>
            <person name="Kudrna K."/>
            <person name="Ammiraju J.S.S."/>
            <person name="Luo M."/>
            <person name="Goicoechea J.L."/>
            <person name="Wing R.A."/>
            <person name="Henry D."/>
            <person name="Oates R."/>
            <person name="Palmer M."/>
            <person name="Pries G."/>
            <person name="Saski C."/>
            <person name="Simmons J."/>
            <person name="Soderlund C."/>
            <person name="Nelson W."/>
            <person name="de la Bastide M."/>
            <person name="Spiegel L."/>
            <person name="Nascimento L."/>
            <person name="Huang E."/>
            <person name="Preston R."/>
            <person name="Zutavern T."/>
            <person name="Palmer L."/>
            <person name="O'Shaughnessy A."/>
            <person name="Dike S."/>
            <person name="McCombie W.R."/>
            <person name="Minx P."/>
            <person name="Cordum H."/>
            <person name="Wilson R."/>
            <person name="Jin W."/>
            <person name="Lee H.R."/>
            <person name="Jiang J."/>
            <person name="Jackson S."/>
        </authorList>
    </citation>
    <scope>NUCLEOTIDE SEQUENCE [LARGE SCALE GENOMIC DNA]</scope>
    <source>
        <strain>cv. Nipponbare</strain>
    </source>
</reference>
<reference key="2">
    <citation type="journal article" date="2005" name="Nature">
        <title>The map-based sequence of the rice genome.</title>
        <authorList>
            <consortium name="International rice genome sequencing project (IRGSP)"/>
        </authorList>
    </citation>
    <scope>NUCLEOTIDE SEQUENCE [LARGE SCALE GENOMIC DNA]</scope>
    <source>
        <strain>cv. Nipponbare</strain>
    </source>
</reference>
<reference key="3">
    <citation type="journal article" date="2008" name="Nucleic Acids Res.">
        <title>The rice annotation project database (RAP-DB): 2008 update.</title>
        <authorList>
            <consortium name="The rice annotation project (RAP)"/>
        </authorList>
    </citation>
    <scope>GENOME REANNOTATION</scope>
    <source>
        <strain>cv. Nipponbare</strain>
    </source>
</reference>
<reference key="4">
    <citation type="journal article" date="2013" name="Rice">
        <title>Improvement of the Oryza sativa Nipponbare reference genome using next generation sequence and optical map data.</title>
        <authorList>
            <person name="Kawahara Y."/>
            <person name="de la Bastide M."/>
            <person name="Hamilton J.P."/>
            <person name="Kanamori H."/>
            <person name="McCombie W.R."/>
            <person name="Ouyang S."/>
            <person name="Schwartz D.C."/>
            <person name="Tanaka T."/>
            <person name="Wu J."/>
            <person name="Zhou S."/>
            <person name="Childs K.L."/>
            <person name="Davidson R.M."/>
            <person name="Lin H."/>
            <person name="Quesada-Ocampo L."/>
            <person name="Vaillancourt B."/>
            <person name="Sakai H."/>
            <person name="Lee S.S."/>
            <person name="Kim J."/>
            <person name="Numa H."/>
            <person name="Itoh T."/>
            <person name="Buell C.R."/>
            <person name="Matsumoto T."/>
        </authorList>
    </citation>
    <scope>GENOME REANNOTATION</scope>
    <source>
        <strain>cv. Nipponbare</strain>
    </source>
</reference>
<reference key="5">
    <citation type="journal article" date="2005" name="PLoS Biol.">
        <title>The genomes of Oryza sativa: a history of duplications.</title>
        <authorList>
            <person name="Yu J."/>
            <person name="Wang J."/>
            <person name="Lin W."/>
            <person name="Li S."/>
            <person name="Li H."/>
            <person name="Zhou J."/>
            <person name="Ni P."/>
            <person name="Dong W."/>
            <person name="Hu S."/>
            <person name="Zeng C."/>
            <person name="Zhang J."/>
            <person name="Zhang Y."/>
            <person name="Li R."/>
            <person name="Xu Z."/>
            <person name="Li S."/>
            <person name="Li X."/>
            <person name="Zheng H."/>
            <person name="Cong L."/>
            <person name="Lin L."/>
            <person name="Yin J."/>
            <person name="Geng J."/>
            <person name="Li G."/>
            <person name="Shi J."/>
            <person name="Liu J."/>
            <person name="Lv H."/>
            <person name="Li J."/>
            <person name="Wang J."/>
            <person name="Deng Y."/>
            <person name="Ran L."/>
            <person name="Shi X."/>
            <person name="Wang X."/>
            <person name="Wu Q."/>
            <person name="Li C."/>
            <person name="Ren X."/>
            <person name="Wang J."/>
            <person name="Wang X."/>
            <person name="Li D."/>
            <person name="Liu D."/>
            <person name="Zhang X."/>
            <person name="Ji Z."/>
            <person name="Zhao W."/>
            <person name="Sun Y."/>
            <person name="Zhang Z."/>
            <person name="Bao J."/>
            <person name="Han Y."/>
            <person name="Dong L."/>
            <person name="Ji J."/>
            <person name="Chen P."/>
            <person name="Wu S."/>
            <person name="Liu J."/>
            <person name="Xiao Y."/>
            <person name="Bu D."/>
            <person name="Tan J."/>
            <person name="Yang L."/>
            <person name="Ye C."/>
            <person name="Zhang J."/>
            <person name="Xu J."/>
            <person name="Zhou Y."/>
            <person name="Yu Y."/>
            <person name="Zhang B."/>
            <person name="Zhuang S."/>
            <person name="Wei H."/>
            <person name="Liu B."/>
            <person name="Lei M."/>
            <person name="Yu H."/>
            <person name="Li Y."/>
            <person name="Xu H."/>
            <person name="Wei S."/>
            <person name="He X."/>
            <person name="Fang L."/>
            <person name="Zhang Z."/>
            <person name="Zhang Y."/>
            <person name="Huang X."/>
            <person name="Su Z."/>
            <person name="Tong W."/>
            <person name="Li J."/>
            <person name="Tong Z."/>
            <person name="Li S."/>
            <person name="Ye J."/>
            <person name="Wang L."/>
            <person name="Fang L."/>
            <person name="Lei T."/>
            <person name="Chen C.-S."/>
            <person name="Chen H.-C."/>
            <person name="Xu Z."/>
            <person name="Li H."/>
            <person name="Huang H."/>
            <person name="Zhang F."/>
            <person name="Xu H."/>
            <person name="Li N."/>
            <person name="Zhao C."/>
            <person name="Li S."/>
            <person name="Dong L."/>
            <person name="Huang Y."/>
            <person name="Li L."/>
            <person name="Xi Y."/>
            <person name="Qi Q."/>
            <person name="Li W."/>
            <person name="Zhang B."/>
            <person name="Hu W."/>
            <person name="Zhang Y."/>
            <person name="Tian X."/>
            <person name="Jiao Y."/>
            <person name="Liang X."/>
            <person name="Jin J."/>
            <person name="Gao L."/>
            <person name="Zheng W."/>
            <person name="Hao B."/>
            <person name="Liu S.-M."/>
            <person name="Wang W."/>
            <person name="Yuan L."/>
            <person name="Cao M."/>
            <person name="McDermott J."/>
            <person name="Samudrala R."/>
            <person name="Wang J."/>
            <person name="Wong G.K.-S."/>
            <person name="Yang H."/>
        </authorList>
    </citation>
    <scope>NUCLEOTIDE SEQUENCE [LARGE SCALE GENOMIC DNA]</scope>
    <source>
        <strain>cv. Nipponbare</strain>
    </source>
</reference>
<reference key="6">
    <citation type="journal article" date="2003" name="Science">
        <title>Collection, mapping, and annotation of over 28,000 cDNA clones from japonica rice.</title>
        <authorList>
            <consortium name="The rice full-length cDNA consortium"/>
        </authorList>
    </citation>
    <scope>NUCLEOTIDE SEQUENCE [LARGE SCALE MRNA]</scope>
    <source>
        <strain>cv. Nipponbare</strain>
    </source>
</reference>
<reference key="7">
    <citation type="journal article" date="2004" name="Plant Cell Physiol.">
        <title>Whole genome analysis of the OsGRF gene family encoding plant-specific putative transcription activators in rice (Oryza sativa L.).</title>
        <authorList>
            <person name="Choi D."/>
            <person name="Kim J.H."/>
            <person name="Kende H."/>
        </authorList>
    </citation>
    <scope>IDENTIFICATION</scope>
    <scope>GENE FAMILY</scope>
    <source>
        <strain>cv. Nipponbare</strain>
    </source>
</reference>